<reference key="1">
    <citation type="journal article" date="2004" name="Proc. Natl. Acad. Sci. U.S.A.">
        <title>Genome sequence of the deep-sea gamma-proteobacterium Idiomarina loihiensis reveals amino acid fermentation as a source of carbon and energy.</title>
        <authorList>
            <person name="Hou S."/>
            <person name="Saw J.H."/>
            <person name="Lee K.S."/>
            <person name="Freitas T.A."/>
            <person name="Belisle C."/>
            <person name="Kawarabayasi Y."/>
            <person name="Donachie S.P."/>
            <person name="Pikina A."/>
            <person name="Galperin M.Y."/>
            <person name="Koonin E.V."/>
            <person name="Makarova K.S."/>
            <person name="Omelchenko M.V."/>
            <person name="Sorokin A."/>
            <person name="Wolf Y.I."/>
            <person name="Li Q.X."/>
            <person name="Keum Y.S."/>
            <person name="Campbell S."/>
            <person name="Denery J."/>
            <person name="Aizawa S."/>
            <person name="Shibata S."/>
            <person name="Malahoff A."/>
            <person name="Alam M."/>
        </authorList>
    </citation>
    <scope>NUCLEOTIDE SEQUENCE [LARGE SCALE GENOMIC DNA]</scope>
    <source>
        <strain>ATCC BAA-735 / DSM 15497 / L2-TR</strain>
    </source>
</reference>
<protein>
    <recommendedName>
        <fullName evidence="1">UPF0246 protein IL2146</fullName>
    </recommendedName>
</protein>
<feature type="chain" id="PRO_0000262024" description="UPF0246 protein IL2146">
    <location>
        <begin position="1"/>
        <end position="258"/>
    </location>
</feature>
<organism>
    <name type="scientific">Idiomarina loihiensis (strain ATCC BAA-735 / DSM 15497 / L2-TR)</name>
    <dbReference type="NCBI Taxonomy" id="283942"/>
    <lineage>
        <taxon>Bacteria</taxon>
        <taxon>Pseudomonadati</taxon>
        <taxon>Pseudomonadota</taxon>
        <taxon>Gammaproteobacteria</taxon>
        <taxon>Alteromonadales</taxon>
        <taxon>Idiomarinaceae</taxon>
        <taxon>Idiomarina</taxon>
    </lineage>
</organism>
<accession>Q5QVF3</accession>
<gene>
    <name type="ordered locus">IL2146</name>
</gene>
<evidence type="ECO:0000255" key="1">
    <source>
        <dbReference type="HAMAP-Rule" id="MF_00652"/>
    </source>
</evidence>
<proteinExistence type="inferred from homology"/>
<sequence length="258" mass="28938">MLAVVSPAKNLDYESDLPELNVTQPRLLDNAEELVEVCRQLSPQQLGSLMKISDKLAGLNAARFEEWQRPFNENNARPAMYAFNGDVYTGLDAASLNSEAIGTAQKQLRILSGLYGVLRPLDLMQPYRLEMGTKLDNPKGKNLYEYWGDSITQMLNKDLAELGSSTLVNLASNEYFSAVKPKVLNADIITPVFKDEKNGQYKVISFYAKKARGLMARFILNQKPKSVSDLKEFDANGYSFNEAMSSDKQLVFCRAEQK</sequence>
<dbReference type="EMBL" id="AE017340">
    <property type="protein sequence ID" value="AAV82978.1"/>
    <property type="molecule type" value="Genomic_DNA"/>
</dbReference>
<dbReference type="SMR" id="Q5QVF3"/>
<dbReference type="STRING" id="283942.IL2146"/>
<dbReference type="GeneID" id="41337335"/>
<dbReference type="KEGG" id="ilo:IL2146"/>
<dbReference type="eggNOG" id="COG3022">
    <property type="taxonomic scope" value="Bacteria"/>
</dbReference>
<dbReference type="HOGENOM" id="CLU_061989_0_0_6"/>
<dbReference type="OrthoDB" id="9777133at2"/>
<dbReference type="Proteomes" id="UP000001171">
    <property type="component" value="Chromosome"/>
</dbReference>
<dbReference type="GO" id="GO:0005829">
    <property type="term" value="C:cytosol"/>
    <property type="evidence" value="ECO:0007669"/>
    <property type="project" value="TreeGrafter"/>
</dbReference>
<dbReference type="GO" id="GO:0033194">
    <property type="term" value="P:response to hydroperoxide"/>
    <property type="evidence" value="ECO:0007669"/>
    <property type="project" value="TreeGrafter"/>
</dbReference>
<dbReference type="HAMAP" id="MF_00652">
    <property type="entry name" value="UPF0246"/>
    <property type="match status" value="1"/>
</dbReference>
<dbReference type="InterPro" id="IPR005583">
    <property type="entry name" value="YaaA"/>
</dbReference>
<dbReference type="NCBIfam" id="NF002541">
    <property type="entry name" value="PRK02101.1-1"/>
    <property type="match status" value="1"/>
</dbReference>
<dbReference type="NCBIfam" id="NF002542">
    <property type="entry name" value="PRK02101.1-3"/>
    <property type="match status" value="1"/>
</dbReference>
<dbReference type="PANTHER" id="PTHR30283:SF4">
    <property type="entry name" value="PEROXIDE STRESS RESISTANCE PROTEIN YAAA"/>
    <property type="match status" value="1"/>
</dbReference>
<dbReference type="PANTHER" id="PTHR30283">
    <property type="entry name" value="PEROXIDE STRESS RESPONSE PROTEIN YAAA"/>
    <property type="match status" value="1"/>
</dbReference>
<dbReference type="Pfam" id="PF03883">
    <property type="entry name" value="H2O2_YaaD"/>
    <property type="match status" value="1"/>
</dbReference>
<comment type="similarity">
    <text evidence="1">Belongs to the UPF0246 family.</text>
</comment>
<keyword id="KW-1185">Reference proteome</keyword>
<name>Y2146_IDILO</name>